<gene>
    <name type="primary">Myrip</name>
    <name type="synonym">Slac2c</name>
</gene>
<proteinExistence type="evidence at protein level"/>
<accession>Q8K3I4</accession>
<accession>A1L320</accession>
<accession>A1L321</accession>
<accession>Q8CFC0</accession>
<accession>Q8K4H5</accession>
<name>MYRIP_MOUSE</name>
<sequence>MGRKLDLSGLTDDETEHVLQVVQRDFNLRKKEEDRLSEMKQRLAEENSKCSILSKHQKFVERCCMRCCSPFTFLVNARRRCGECKFSVCKSCCSYQKHEKLWVCCVCQQARLLRTQSLEWFYNNVKSRFKRFGSAKVLKNLYRKHRLESGACFDILGGGLFEPNLENEGSISGSDSTFYRQSEGHSMMDTLAVALRVAEEAIEEAISKAESHGDSLDKQNEASYLRDHKQELTEELAGTILQRIIRKQKDKAELRAEEEEPEWPRSQSGSVKARGEGTTAPPGRHKARATFRRSQSAFSFTMEDALKSGSAEAAPRSPKDRAQRLLEEAALPSWRSMDGLDGTNLAPLLQSPDGNWMTLKDGSRQPPTRLLTKPKSGTFQALEVASSVTSAYDEIGSDSEEDFDYSEALSKLCPPSQSRLKQPQPQPTQAQSSGQGPLATSPSNPEAMCSDSETSSTSSSREAGCRAKLSWLQRKAPKNPAVEKMPLQGELDVNFNPQAAGGETSDSSDPEETLRTAERRARRWRRARVGPEESNRGLPSPGAHPRALHTAQVSDNVSETDISNETQNSRSSTDSVEEKLRNRLYELAMKMSEKETSSGEDQESESKAEPKNQKGSLSSEENNQGVQEELKKKCSAVSLCNISTEVLKVINATEELIAESAGPWEIPPVSTDRENGMFPLGTDQVRLDKQLTSLEENVYLAAGTVYGLEGQLSELEDAARCIHSSTGETELADLEDQVAAAAAQVHHAELQISDIESRISALTIAGLNIAPCVRLTRRRDQKQRSQVQTIDTSRQQRRKLPAPPVKAEKIEASSVTPIKTFNRNFLLQGSSTNRPTASTGDTKDLMEPDLESAVMY</sequence>
<feature type="chain" id="PRO_0000190225" description="Rab effector MyRIP">
    <location>
        <begin position="1"/>
        <end position="856"/>
    </location>
</feature>
<feature type="domain" description="RabBD" evidence="2">
    <location>
        <begin position="4"/>
        <end position="124"/>
    </location>
</feature>
<feature type="zinc finger region" description="FYVE-type">
    <location>
        <begin position="63"/>
        <end position="105"/>
    </location>
</feature>
<feature type="region of interest" description="Myosin-binding">
    <location>
        <begin position="143"/>
        <end position="560"/>
    </location>
</feature>
<feature type="region of interest" description="PRKAR2A-binding">
    <location>
        <begin position="193"/>
        <end position="209"/>
    </location>
</feature>
<feature type="region of interest" description="Negative regulation of PRKAR2A-binding">
    <location>
        <begin position="232"/>
        <end position="248"/>
    </location>
</feature>
<feature type="region of interest" description="Disordered" evidence="3">
    <location>
        <begin position="252"/>
        <end position="294"/>
    </location>
</feature>
<feature type="region of interest" description="Disordered" evidence="3">
    <location>
        <begin position="351"/>
        <end position="578"/>
    </location>
</feature>
<feature type="region of interest" description="Actin-binding">
    <location>
        <begin position="495"/>
        <end position="856"/>
    </location>
</feature>
<feature type="region of interest" description="Disordered" evidence="3">
    <location>
        <begin position="592"/>
        <end position="625"/>
    </location>
</feature>
<feature type="region of interest" description="Disordered" evidence="3">
    <location>
        <begin position="778"/>
        <end position="806"/>
    </location>
</feature>
<feature type="region of interest" description="Disordered" evidence="3">
    <location>
        <begin position="826"/>
        <end position="856"/>
    </location>
</feature>
<feature type="compositionally biased region" description="Acidic residues" evidence="3">
    <location>
        <begin position="395"/>
        <end position="405"/>
    </location>
</feature>
<feature type="compositionally biased region" description="Low complexity" evidence="3">
    <location>
        <begin position="427"/>
        <end position="437"/>
    </location>
</feature>
<feature type="compositionally biased region" description="Low complexity" evidence="3">
    <location>
        <begin position="450"/>
        <end position="460"/>
    </location>
</feature>
<feature type="compositionally biased region" description="Polar residues" evidence="3">
    <location>
        <begin position="551"/>
        <end position="574"/>
    </location>
</feature>
<feature type="compositionally biased region" description="Polar residues" evidence="3">
    <location>
        <begin position="613"/>
        <end position="625"/>
    </location>
</feature>
<feature type="compositionally biased region" description="Polar residues" evidence="3">
    <location>
        <begin position="784"/>
        <end position="793"/>
    </location>
</feature>
<feature type="compositionally biased region" description="Polar residues" evidence="3">
    <location>
        <begin position="826"/>
        <end position="840"/>
    </location>
</feature>
<feature type="modified residue" description="Phosphoserine" evidence="8">
    <location>
        <position position="299"/>
    </location>
</feature>
<feature type="modified residue" description="Phosphoserine" evidence="1">
    <location>
        <position position="351"/>
    </location>
</feature>
<feature type="mutagenesis site" description="Loss of PRKAR2A-binding; when associated with P-206." evidence="6">
    <original>V</original>
    <variation>P</variation>
    <location>
        <position position="197"/>
    </location>
</feature>
<feature type="mutagenesis site" description="Loss of PRKAR2A-binding; when associated with P-197." evidence="6">
    <original>I</original>
    <variation>P</variation>
    <location>
        <position position="206"/>
    </location>
</feature>
<feature type="mutagenesis site" description="Increased PRKAR2A-binding; when associated with P-245.">
    <original>L</original>
    <variation>P</variation>
    <location>
        <position position="236"/>
    </location>
</feature>
<feature type="mutagenesis site" description="Increased PRKAR2A-binding; when associated with P-245.">
    <original>I</original>
    <variation>P</variation>
    <location>
        <position position="245"/>
    </location>
</feature>
<feature type="sequence conflict" description="In Ref. 5; AAI29853." evidence="7" ref="5">
    <original>S</original>
    <variation>P</variation>
    <location>
        <position position="266"/>
    </location>
</feature>
<feature type="sequence conflict" description="In Ref. 5; AAI29853." evidence="7" ref="5">
    <original>A</original>
    <variation>T</variation>
    <location>
        <position position="322"/>
    </location>
</feature>
<feature type="sequence conflict" description="In Ref. 1; AAM43955." evidence="7" ref="1">
    <original>E</original>
    <variation>G</variation>
    <location>
        <position position="400"/>
    </location>
</feature>
<feature type="sequence conflict" description="In Ref. 2; BAC15554." evidence="7" ref="2">
    <original>A</original>
    <variation>R</variation>
    <location>
        <position position="408"/>
    </location>
</feature>
<feature type="sequence conflict" description="In Ref. 1; AAM43955." evidence="7" ref="1">
    <original>L</original>
    <variation>F</variation>
    <location>
        <position position="409"/>
    </location>
</feature>
<feature type="sequence conflict" description="In Ref. 1; AAM43955 and 5; AAI29852." evidence="7" ref="1 5">
    <original>E</original>
    <variation>K</variation>
    <location>
        <position position="593"/>
    </location>
</feature>
<comment type="function">
    <text evidence="6">Rab effector protein involved in melanosome transport. Serves as link between melanosome-bound RAB27A and the motor proteins MYO5A and MYO7A. May link RAB27A-containing vesicles to actin filaments. Functions as a protein kinase A-anchoring protein (AKAP). May act as a scaffolding protein that links PKA to components of the exocytosis machinery, thus facilitating exocytosis, including insulin release.</text>
</comment>
<comment type="subunit">
    <text evidence="5 6">Binds RAB27A that has been activated by GTP-binding via its N-terminus. Binds MYO5A, MYO7A and F-actin. Interacts with PRKAR2A. Interacts with components of the exocyst complex, including EXOC3 and EXOC4.</text>
</comment>
<comment type="subcellular location">
    <subcellularLocation>
        <location evidence="5">Cytoplasm</location>
    </subcellularLocation>
    <subcellularLocation>
        <location evidence="1">Cytoplasm</location>
        <location evidence="1">Perinuclear region</location>
    </subcellularLocation>
    <subcellularLocation>
        <location evidence="1">Cytoplasmic vesicle</location>
        <location evidence="1">Secretory vesicle</location>
    </subcellularLocation>
    <subcellularLocation>
        <location evidence="4 5">Melanosome</location>
    </subcellularLocation>
    <text evidence="4 5">In presynaptic and postsynaptic areas in photoreceptor cells and in the basal microvilli of retinal pigment epithelium cells. Associated with melanosomes. Colocalizes with actin filaments. In insulin-secreting cells, associated with dense core secretory granules.</text>
</comment>
<comment type="tissue specificity">
    <text evidence="4 5">Detected in brain, skin, heart, lung, adrenal medulla, pancreas, intestine, liver, kidney, skeletal muscle and testis. Detected in cochlear and vestibular hair cells in the inner ear, and in photoreceptor and pigment epithelium cells in the retina.</text>
</comment>
<evidence type="ECO:0000250" key="1">
    <source>
        <dbReference type="UniProtKB" id="Q7TNY7"/>
    </source>
</evidence>
<evidence type="ECO:0000255" key="2">
    <source>
        <dbReference type="PROSITE-ProRule" id="PRU00234"/>
    </source>
</evidence>
<evidence type="ECO:0000256" key="3">
    <source>
        <dbReference type="SAM" id="MobiDB-lite"/>
    </source>
</evidence>
<evidence type="ECO:0000269" key="4">
    <source>
    </source>
</evidence>
<evidence type="ECO:0000269" key="5">
    <source>
    </source>
</evidence>
<evidence type="ECO:0000269" key="6">
    <source>
    </source>
</evidence>
<evidence type="ECO:0000305" key="7"/>
<evidence type="ECO:0007744" key="8">
    <source>
    </source>
</evidence>
<dbReference type="EMBL" id="AF396688">
    <property type="protein sequence ID" value="AAM43955.1"/>
    <property type="molecule type" value="mRNA"/>
</dbReference>
<dbReference type="EMBL" id="AY099470">
    <property type="protein sequence ID" value="AAM44403.1"/>
    <property type="molecule type" value="mRNA"/>
</dbReference>
<dbReference type="EMBL" id="AB083782">
    <property type="protein sequence ID" value="BAC15554.1"/>
    <property type="molecule type" value="mRNA"/>
</dbReference>
<dbReference type="EMBL" id="AK038988">
    <property type="protein sequence ID" value="BAC30194.1"/>
    <property type="molecule type" value="mRNA"/>
</dbReference>
<dbReference type="EMBL" id="AK083225">
    <property type="protein sequence ID" value="BAC38816.1"/>
    <property type="molecule type" value="mRNA"/>
</dbReference>
<dbReference type="EMBL" id="BC129851">
    <property type="protein sequence ID" value="AAI29852.1"/>
    <property type="molecule type" value="mRNA"/>
</dbReference>
<dbReference type="EMBL" id="BC129852">
    <property type="protein sequence ID" value="AAI29853.1"/>
    <property type="molecule type" value="mRNA"/>
</dbReference>
<dbReference type="CCDS" id="CCDS23627.1"/>
<dbReference type="RefSeq" id="NP_653140.1">
    <property type="nucleotide sequence ID" value="NM_144557.5"/>
</dbReference>
<dbReference type="RefSeq" id="XP_006512188.1">
    <property type="nucleotide sequence ID" value="XM_006512125.4"/>
</dbReference>
<dbReference type="SMR" id="Q8K3I4"/>
<dbReference type="CORUM" id="Q8K3I4"/>
<dbReference type="FunCoup" id="Q8K3I4">
    <property type="interactions" value="345"/>
</dbReference>
<dbReference type="STRING" id="10090.ENSMUSP00000046891"/>
<dbReference type="GlyGen" id="Q8K3I4">
    <property type="glycosylation" value="1 site"/>
</dbReference>
<dbReference type="iPTMnet" id="Q8K3I4"/>
<dbReference type="PhosphoSitePlus" id="Q8K3I4"/>
<dbReference type="PaxDb" id="10090-ENSMUSP00000046891"/>
<dbReference type="ProteomicsDB" id="293609"/>
<dbReference type="Antibodypedia" id="28983">
    <property type="antibodies" value="163 antibodies from 26 providers"/>
</dbReference>
<dbReference type="DNASU" id="245049"/>
<dbReference type="Ensembl" id="ENSMUST00000048121.13">
    <property type="protein sequence ID" value="ENSMUSP00000046891.7"/>
    <property type="gene ID" value="ENSMUSG00000041794.14"/>
</dbReference>
<dbReference type="GeneID" id="245049"/>
<dbReference type="KEGG" id="mmu:245049"/>
<dbReference type="UCSC" id="uc009scn.1">
    <property type="organism name" value="mouse"/>
</dbReference>
<dbReference type="AGR" id="MGI:2384407"/>
<dbReference type="CTD" id="25924"/>
<dbReference type="MGI" id="MGI:2384407">
    <property type="gene designation" value="Myrip"/>
</dbReference>
<dbReference type="VEuPathDB" id="HostDB:ENSMUSG00000041794"/>
<dbReference type="eggNOG" id="ENOG502QPUS">
    <property type="taxonomic scope" value="Eukaryota"/>
</dbReference>
<dbReference type="GeneTree" id="ENSGT00950000183138"/>
<dbReference type="HOGENOM" id="CLU_008568_0_0_1"/>
<dbReference type="InParanoid" id="Q8K3I4"/>
<dbReference type="OMA" id="IHSGTQD"/>
<dbReference type="OrthoDB" id="10072397at2759"/>
<dbReference type="PhylomeDB" id="Q8K3I4"/>
<dbReference type="TreeFam" id="TF331599"/>
<dbReference type="Reactome" id="R-MMU-9824585">
    <property type="pathway name" value="Regulation of MITF-M-dependent genes involved in pigmentation"/>
</dbReference>
<dbReference type="BioGRID-ORCS" id="245049">
    <property type="hits" value="0 hits in 77 CRISPR screens"/>
</dbReference>
<dbReference type="ChiTaRS" id="Myrip">
    <property type="organism name" value="mouse"/>
</dbReference>
<dbReference type="PRO" id="PR:Q8K3I4"/>
<dbReference type="Proteomes" id="UP000000589">
    <property type="component" value="Chromosome 9"/>
</dbReference>
<dbReference type="RNAct" id="Q8K3I4">
    <property type="molecule type" value="protein"/>
</dbReference>
<dbReference type="Bgee" id="ENSMUSG00000041794">
    <property type="expression patterns" value="Expressed in pigmented layer of retina and 153 other cell types or tissues"/>
</dbReference>
<dbReference type="ExpressionAtlas" id="Q8K3I4">
    <property type="expression patterns" value="baseline and differential"/>
</dbReference>
<dbReference type="GO" id="GO:0015629">
    <property type="term" value="C:actin cytoskeleton"/>
    <property type="evidence" value="ECO:0000314"/>
    <property type="project" value="MGI"/>
</dbReference>
<dbReference type="GO" id="GO:0031045">
    <property type="term" value="C:dense core granule"/>
    <property type="evidence" value="ECO:0000250"/>
    <property type="project" value="UniProtKB"/>
</dbReference>
<dbReference type="GO" id="GO:0000145">
    <property type="term" value="C:exocyst"/>
    <property type="evidence" value="ECO:0000314"/>
    <property type="project" value="UniProtKB"/>
</dbReference>
<dbReference type="GO" id="GO:0042470">
    <property type="term" value="C:melanosome"/>
    <property type="evidence" value="ECO:0000314"/>
    <property type="project" value="UniProtKB"/>
</dbReference>
<dbReference type="GO" id="GO:0048471">
    <property type="term" value="C:perinuclear region of cytoplasm"/>
    <property type="evidence" value="ECO:0000250"/>
    <property type="project" value="UniProtKB"/>
</dbReference>
<dbReference type="GO" id="GO:0001750">
    <property type="term" value="C:photoreceptor outer segment"/>
    <property type="evidence" value="ECO:0000314"/>
    <property type="project" value="UniProtKB"/>
</dbReference>
<dbReference type="GO" id="GO:0045202">
    <property type="term" value="C:synapse"/>
    <property type="evidence" value="ECO:0000314"/>
    <property type="project" value="UniProtKB"/>
</dbReference>
<dbReference type="GO" id="GO:0030133">
    <property type="term" value="C:transport vesicle"/>
    <property type="evidence" value="ECO:0007669"/>
    <property type="project" value="UniProtKB-SubCell"/>
</dbReference>
<dbReference type="GO" id="GO:0003779">
    <property type="term" value="F:actin binding"/>
    <property type="evidence" value="ECO:0000314"/>
    <property type="project" value="MGI"/>
</dbReference>
<dbReference type="GO" id="GO:0017022">
    <property type="term" value="F:myosin binding"/>
    <property type="evidence" value="ECO:0000314"/>
    <property type="project" value="MGI"/>
</dbReference>
<dbReference type="GO" id="GO:0051018">
    <property type="term" value="F:protein kinase A binding"/>
    <property type="evidence" value="ECO:0000353"/>
    <property type="project" value="UniProtKB"/>
</dbReference>
<dbReference type="GO" id="GO:0031267">
    <property type="term" value="F:small GTPase binding"/>
    <property type="evidence" value="ECO:0000314"/>
    <property type="project" value="MGI"/>
</dbReference>
<dbReference type="GO" id="GO:0008270">
    <property type="term" value="F:zinc ion binding"/>
    <property type="evidence" value="ECO:0007669"/>
    <property type="project" value="UniProtKB-KW"/>
</dbReference>
<dbReference type="GO" id="GO:0006886">
    <property type="term" value="P:intracellular protein transport"/>
    <property type="evidence" value="ECO:0007669"/>
    <property type="project" value="InterPro"/>
</dbReference>
<dbReference type="GO" id="GO:0032024">
    <property type="term" value="P:positive regulation of insulin secretion"/>
    <property type="evidence" value="ECO:0000250"/>
    <property type="project" value="UniProtKB"/>
</dbReference>
<dbReference type="GO" id="GO:0030050">
    <property type="term" value="P:vesicle transport along actin filament"/>
    <property type="evidence" value="ECO:0000304"/>
    <property type="project" value="MGI"/>
</dbReference>
<dbReference type="FunFam" id="3.30.40.10:FF:000018">
    <property type="entry name" value="Synaptotagmin-like 5, isoform CRA_a"/>
    <property type="match status" value="1"/>
</dbReference>
<dbReference type="Gene3D" id="3.30.40.10">
    <property type="entry name" value="Zinc/RING finger domain, C3HC4 (zinc finger)"/>
    <property type="match status" value="1"/>
</dbReference>
<dbReference type="InterPro" id="IPR041282">
    <property type="entry name" value="FYVE_2"/>
</dbReference>
<dbReference type="InterPro" id="IPR051745">
    <property type="entry name" value="Intracell_Transport_Effector"/>
</dbReference>
<dbReference type="InterPro" id="IPR006788">
    <property type="entry name" value="Myrip/Melanophilin"/>
</dbReference>
<dbReference type="InterPro" id="IPR010911">
    <property type="entry name" value="Rab_BD"/>
</dbReference>
<dbReference type="InterPro" id="IPR011011">
    <property type="entry name" value="Znf_FYVE_PHD"/>
</dbReference>
<dbReference type="InterPro" id="IPR013083">
    <property type="entry name" value="Znf_RING/FYVE/PHD"/>
</dbReference>
<dbReference type="PANTHER" id="PTHR14555">
    <property type="entry name" value="MYELIN-ASSOCIATED OLIGODENDROCYTIC BASIC PROTEIN MOBP -RELATED"/>
    <property type="match status" value="1"/>
</dbReference>
<dbReference type="PANTHER" id="PTHR14555:SF6">
    <property type="entry name" value="RAB EFFECTOR MYRIP"/>
    <property type="match status" value="1"/>
</dbReference>
<dbReference type="Pfam" id="PF02318">
    <property type="entry name" value="FYVE_2"/>
    <property type="match status" value="1"/>
</dbReference>
<dbReference type="Pfam" id="PF04698">
    <property type="entry name" value="Rab_eff_C"/>
    <property type="match status" value="1"/>
</dbReference>
<dbReference type="SUPFAM" id="SSF57903">
    <property type="entry name" value="FYVE/PHD zinc finger"/>
    <property type="match status" value="1"/>
</dbReference>
<dbReference type="PROSITE" id="PS50916">
    <property type="entry name" value="RABBD"/>
    <property type="match status" value="1"/>
</dbReference>
<reference key="1">
    <citation type="journal article" date="2002" name="EMBO Rep.">
        <title>MyRIP, a novel Rab effector, enables myosin VIIa recruitment to retinal melanosomes.</title>
        <authorList>
            <person name="El-Amraoui A."/>
            <person name="Schonn J.-S."/>
            <person name="Kuessel-Andermann P."/>
            <person name="Blanchard S."/>
            <person name="Desnos C."/>
            <person name="Henry J.-P."/>
            <person name="Wolfrum U."/>
            <person name="Darchen F."/>
            <person name="Petit C."/>
        </authorList>
    </citation>
    <scope>NUCLEOTIDE SEQUENCE [MRNA]</scope>
    <scope>SUBCELLULAR LOCATION</scope>
    <scope>TISSUE SPECIFICITY</scope>
    <source>
        <tissue>Inner ear</tissue>
    </source>
</reference>
<reference key="2">
    <citation type="journal article" date="2002" name="FEBS Lett.">
        <title>Melanophilin directly links Rab27a and myosin Va through its distinct coiled-coil regions.</title>
        <authorList>
            <person name="Nagashima K."/>
            <person name="Torii S."/>
            <person name="Yi Z."/>
            <person name="Igarashi M."/>
            <person name="Okamoto K."/>
            <person name="Takeuchi T."/>
            <person name="Izumi T."/>
        </authorList>
    </citation>
    <scope>NUCLEOTIDE SEQUENCE [MRNA]</scope>
    <source>
        <strain>C57BL/6J</strain>
        <tissue>Brain</tissue>
    </source>
</reference>
<reference key="3">
    <citation type="journal article" date="2002" name="J. Biol. Chem.">
        <title>Slac2-c (synaptotagmin-like protein homologue lacking C2 domains-c), a novel linker protein that interacts with Rab27, myosin Va/VIIa, and actin.</title>
        <authorList>
            <person name="Fukuda M."/>
            <person name="Kuroda T.S."/>
        </authorList>
    </citation>
    <scope>NUCLEOTIDE SEQUENCE [MRNA]</scope>
    <scope>INTERACTION WITH RAB27A; MYO5A; MYO7A AND F-ACTIN</scope>
    <scope>SUBCELLULAR LOCATION</scope>
    <scope>TISSUE SPECIFICITY</scope>
    <source>
        <tissue>Brain</tissue>
    </source>
</reference>
<reference key="4">
    <citation type="journal article" date="2005" name="Science">
        <title>The transcriptional landscape of the mammalian genome.</title>
        <authorList>
            <person name="Carninci P."/>
            <person name="Kasukawa T."/>
            <person name="Katayama S."/>
            <person name="Gough J."/>
            <person name="Frith M.C."/>
            <person name="Maeda N."/>
            <person name="Oyama R."/>
            <person name="Ravasi T."/>
            <person name="Lenhard B."/>
            <person name="Wells C."/>
            <person name="Kodzius R."/>
            <person name="Shimokawa K."/>
            <person name="Bajic V.B."/>
            <person name="Brenner S.E."/>
            <person name="Batalov S."/>
            <person name="Forrest A.R."/>
            <person name="Zavolan M."/>
            <person name="Davis M.J."/>
            <person name="Wilming L.G."/>
            <person name="Aidinis V."/>
            <person name="Allen J.E."/>
            <person name="Ambesi-Impiombato A."/>
            <person name="Apweiler R."/>
            <person name="Aturaliya R.N."/>
            <person name="Bailey T.L."/>
            <person name="Bansal M."/>
            <person name="Baxter L."/>
            <person name="Beisel K.W."/>
            <person name="Bersano T."/>
            <person name="Bono H."/>
            <person name="Chalk A.M."/>
            <person name="Chiu K.P."/>
            <person name="Choudhary V."/>
            <person name="Christoffels A."/>
            <person name="Clutterbuck D.R."/>
            <person name="Crowe M.L."/>
            <person name="Dalla E."/>
            <person name="Dalrymple B.P."/>
            <person name="de Bono B."/>
            <person name="Della Gatta G."/>
            <person name="di Bernardo D."/>
            <person name="Down T."/>
            <person name="Engstrom P."/>
            <person name="Fagiolini M."/>
            <person name="Faulkner G."/>
            <person name="Fletcher C.F."/>
            <person name="Fukushima T."/>
            <person name="Furuno M."/>
            <person name="Futaki S."/>
            <person name="Gariboldi M."/>
            <person name="Georgii-Hemming P."/>
            <person name="Gingeras T.R."/>
            <person name="Gojobori T."/>
            <person name="Green R.E."/>
            <person name="Gustincich S."/>
            <person name="Harbers M."/>
            <person name="Hayashi Y."/>
            <person name="Hensch T.K."/>
            <person name="Hirokawa N."/>
            <person name="Hill D."/>
            <person name="Huminiecki L."/>
            <person name="Iacono M."/>
            <person name="Ikeo K."/>
            <person name="Iwama A."/>
            <person name="Ishikawa T."/>
            <person name="Jakt M."/>
            <person name="Kanapin A."/>
            <person name="Katoh M."/>
            <person name="Kawasawa Y."/>
            <person name="Kelso J."/>
            <person name="Kitamura H."/>
            <person name="Kitano H."/>
            <person name="Kollias G."/>
            <person name="Krishnan S.P."/>
            <person name="Kruger A."/>
            <person name="Kummerfeld S.K."/>
            <person name="Kurochkin I.V."/>
            <person name="Lareau L.F."/>
            <person name="Lazarevic D."/>
            <person name="Lipovich L."/>
            <person name="Liu J."/>
            <person name="Liuni S."/>
            <person name="McWilliam S."/>
            <person name="Madan Babu M."/>
            <person name="Madera M."/>
            <person name="Marchionni L."/>
            <person name="Matsuda H."/>
            <person name="Matsuzawa S."/>
            <person name="Miki H."/>
            <person name="Mignone F."/>
            <person name="Miyake S."/>
            <person name="Morris K."/>
            <person name="Mottagui-Tabar S."/>
            <person name="Mulder N."/>
            <person name="Nakano N."/>
            <person name="Nakauchi H."/>
            <person name="Ng P."/>
            <person name="Nilsson R."/>
            <person name="Nishiguchi S."/>
            <person name="Nishikawa S."/>
            <person name="Nori F."/>
            <person name="Ohara O."/>
            <person name="Okazaki Y."/>
            <person name="Orlando V."/>
            <person name="Pang K.C."/>
            <person name="Pavan W.J."/>
            <person name="Pavesi G."/>
            <person name="Pesole G."/>
            <person name="Petrovsky N."/>
            <person name="Piazza S."/>
            <person name="Reed J."/>
            <person name="Reid J.F."/>
            <person name="Ring B.Z."/>
            <person name="Ringwald M."/>
            <person name="Rost B."/>
            <person name="Ruan Y."/>
            <person name="Salzberg S.L."/>
            <person name="Sandelin A."/>
            <person name="Schneider C."/>
            <person name="Schoenbach C."/>
            <person name="Sekiguchi K."/>
            <person name="Semple C.A."/>
            <person name="Seno S."/>
            <person name="Sessa L."/>
            <person name="Sheng Y."/>
            <person name="Shibata Y."/>
            <person name="Shimada H."/>
            <person name="Shimada K."/>
            <person name="Silva D."/>
            <person name="Sinclair B."/>
            <person name="Sperling S."/>
            <person name="Stupka E."/>
            <person name="Sugiura K."/>
            <person name="Sultana R."/>
            <person name="Takenaka Y."/>
            <person name="Taki K."/>
            <person name="Tammoja K."/>
            <person name="Tan S.L."/>
            <person name="Tang S."/>
            <person name="Taylor M.S."/>
            <person name="Tegner J."/>
            <person name="Teichmann S.A."/>
            <person name="Ueda H.R."/>
            <person name="van Nimwegen E."/>
            <person name="Verardo R."/>
            <person name="Wei C.L."/>
            <person name="Yagi K."/>
            <person name="Yamanishi H."/>
            <person name="Zabarovsky E."/>
            <person name="Zhu S."/>
            <person name="Zimmer A."/>
            <person name="Hide W."/>
            <person name="Bult C."/>
            <person name="Grimmond S.M."/>
            <person name="Teasdale R.D."/>
            <person name="Liu E.T."/>
            <person name="Brusic V."/>
            <person name="Quackenbush J."/>
            <person name="Wahlestedt C."/>
            <person name="Mattick J.S."/>
            <person name="Hume D.A."/>
            <person name="Kai C."/>
            <person name="Sasaki D."/>
            <person name="Tomaru Y."/>
            <person name="Fukuda S."/>
            <person name="Kanamori-Katayama M."/>
            <person name="Suzuki M."/>
            <person name="Aoki J."/>
            <person name="Arakawa T."/>
            <person name="Iida J."/>
            <person name="Imamura K."/>
            <person name="Itoh M."/>
            <person name="Kato T."/>
            <person name="Kawaji H."/>
            <person name="Kawagashira N."/>
            <person name="Kawashima T."/>
            <person name="Kojima M."/>
            <person name="Kondo S."/>
            <person name="Konno H."/>
            <person name="Nakano K."/>
            <person name="Ninomiya N."/>
            <person name="Nishio T."/>
            <person name="Okada M."/>
            <person name="Plessy C."/>
            <person name="Shibata K."/>
            <person name="Shiraki T."/>
            <person name="Suzuki S."/>
            <person name="Tagami M."/>
            <person name="Waki K."/>
            <person name="Watahiki A."/>
            <person name="Okamura-Oho Y."/>
            <person name="Suzuki H."/>
            <person name="Kawai J."/>
            <person name="Hayashizaki Y."/>
        </authorList>
    </citation>
    <scope>NUCLEOTIDE SEQUENCE [LARGE SCALE MRNA]</scope>
    <source>
        <strain>C57BL/6J</strain>
        <tissue>Hippocampus</tissue>
        <tissue>Hypothalamus</tissue>
    </source>
</reference>
<reference key="5">
    <citation type="journal article" date="2004" name="Genome Res.">
        <title>The status, quality, and expansion of the NIH full-length cDNA project: the Mammalian Gene Collection (MGC).</title>
        <authorList>
            <consortium name="The MGC Project Team"/>
        </authorList>
    </citation>
    <scope>NUCLEOTIDE SEQUENCE [LARGE SCALE MRNA]</scope>
</reference>
<reference key="6">
    <citation type="journal article" date="2007" name="J. Biol. Chem.">
        <title>MyRIP anchors protein kinase A to the exocyst complex.</title>
        <authorList>
            <person name="Goehring A.S."/>
            <person name="Pedroja B.S."/>
            <person name="Hinke S.A."/>
            <person name="Langeberg L.K."/>
            <person name="Scott J.D."/>
        </authorList>
    </citation>
    <scope>FUNCTION</scope>
    <scope>INTERACTION WITH PRKAR2A; EXOC3 AND EXOC4</scope>
    <scope>MUTAGENESIS OF VAL-197 AND ILE-206</scope>
</reference>
<reference key="7">
    <citation type="journal article" date="2010" name="Cell">
        <title>A tissue-specific atlas of mouse protein phosphorylation and expression.</title>
        <authorList>
            <person name="Huttlin E.L."/>
            <person name="Jedrychowski M.P."/>
            <person name="Elias J.E."/>
            <person name="Goswami T."/>
            <person name="Rad R."/>
            <person name="Beausoleil S.A."/>
            <person name="Villen J."/>
            <person name="Haas W."/>
            <person name="Sowa M.E."/>
            <person name="Gygi S.P."/>
        </authorList>
    </citation>
    <scope>PHOSPHORYLATION [LARGE SCALE ANALYSIS] AT SER-299</scope>
    <scope>IDENTIFICATION BY MASS SPECTROMETRY [LARGE SCALE ANALYSIS]</scope>
    <source>
        <tissue>Brain</tissue>
        <tissue>Lung</tissue>
        <tissue>Pancreas</tissue>
    </source>
</reference>
<organism>
    <name type="scientific">Mus musculus</name>
    <name type="common">Mouse</name>
    <dbReference type="NCBI Taxonomy" id="10090"/>
    <lineage>
        <taxon>Eukaryota</taxon>
        <taxon>Metazoa</taxon>
        <taxon>Chordata</taxon>
        <taxon>Craniata</taxon>
        <taxon>Vertebrata</taxon>
        <taxon>Euteleostomi</taxon>
        <taxon>Mammalia</taxon>
        <taxon>Eutheria</taxon>
        <taxon>Euarchontoglires</taxon>
        <taxon>Glires</taxon>
        <taxon>Rodentia</taxon>
        <taxon>Myomorpha</taxon>
        <taxon>Muroidea</taxon>
        <taxon>Muridae</taxon>
        <taxon>Murinae</taxon>
        <taxon>Mus</taxon>
        <taxon>Mus</taxon>
    </lineage>
</organism>
<protein>
    <recommendedName>
        <fullName>Rab effector MyRIP</fullName>
    </recommendedName>
    <alternativeName>
        <fullName>Exophilin-8</fullName>
    </alternativeName>
    <alternativeName>
        <fullName>Myosin-VIIa- and Rab-interacting protein</fullName>
    </alternativeName>
    <alternativeName>
        <fullName>Synaptotagmin-like protein lacking C2 domains C</fullName>
        <shortName>SlaC2-c</shortName>
        <shortName>Slp homolog lacking C2 domains c</shortName>
    </alternativeName>
</protein>
<keyword id="KW-0009">Actin-binding</keyword>
<keyword id="KW-0963">Cytoplasm</keyword>
<keyword id="KW-0968">Cytoplasmic vesicle</keyword>
<keyword id="KW-0479">Metal-binding</keyword>
<keyword id="KW-0597">Phosphoprotein</keyword>
<keyword id="KW-1185">Reference proteome</keyword>
<keyword id="KW-0677">Repeat</keyword>
<keyword id="KW-0862">Zinc</keyword>
<keyword id="KW-0863">Zinc-finger</keyword>